<dbReference type="EMBL" id="AM422018">
    <property type="protein sequence ID" value="CAM11907.1"/>
    <property type="molecule type" value="Genomic_DNA"/>
</dbReference>
<dbReference type="SMR" id="B1VAD4"/>
<dbReference type="STRING" id="59748.PA0573"/>
<dbReference type="KEGG" id="pal:PA0573"/>
<dbReference type="eggNOG" id="COG0096">
    <property type="taxonomic scope" value="Bacteria"/>
</dbReference>
<dbReference type="Proteomes" id="UP000008323">
    <property type="component" value="Chromosome"/>
</dbReference>
<dbReference type="GO" id="GO:1990904">
    <property type="term" value="C:ribonucleoprotein complex"/>
    <property type="evidence" value="ECO:0007669"/>
    <property type="project" value="UniProtKB-KW"/>
</dbReference>
<dbReference type="GO" id="GO:0005840">
    <property type="term" value="C:ribosome"/>
    <property type="evidence" value="ECO:0007669"/>
    <property type="project" value="UniProtKB-KW"/>
</dbReference>
<dbReference type="GO" id="GO:0019843">
    <property type="term" value="F:rRNA binding"/>
    <property type="evidence" value="ECO:0007669"/>
    <property type="project" value="UniProtKB-UniRule"/>
</dbReference>
<dbReference type="GO" id="GO:0003735">
    <property type="term" value="F:structural constituent of ribosome"/>
    <property type="evidence" value="ECO:0007669"/>
    <property type="project" value="InterPro"/>
</dbReference>
<dbReference type="GO" id="GO:0006412">
    <property type="term" value="P:translation"/>
    <property type="evidence" value="ECO:0007669"/>
    <property type="project" value="UniProtKB-UniRule"/>
</dbReference>
<dbReference type="FunFam" id="3.30.1370.30:FF:000002">
    <property type="entry name" value="30S ribosomal protein S8"/>
    <property type="match status" value="1"/>
</dbReference>
<dbReference type="FunFam" id="3.30.1490.10:FF:000001">
    <property type="entry name" value="30S ribosomal protein S8"/>
    <property type="match status" value="1"/>
</dbReference>
<dbReference type="Gene3D" id="3.30.1370.30">
    <property type="match status" value="1"/>
</dbReference>
<dbReference type="Gene3D" id="3.30.1490.10">
    <property type="match status" value="1"/>
</dbReference>
<dbReference type="HAMAP" id="MF_01302_B">
    <property type="entry name" value="Ribosomal_uS8_B"/>
    <property type="match status" value="1"/>
</dbReference>
<dbReference type="InterPro" id="IPR000630">
    <property type="entry name" value="Ribosomal_uS8"/>
</dbReference>
<dbReference type="InterPro" id="IPR047863">
    <property type="entry name" value="Ribosomal_uS8_CS"/>
</dbReference>
<dbReference type="InterPro" id="IPR035987">
    <property type="entry name" value="Ribosomal_uS8_sf"/>
</dbReference>
<dbReference type="NCBIfam" id="NF001109">
    <property type="entry name" value="PRK00136.1"/>
    <property type="match status" value="1"/>
</dbReference>
<dbReference type="PANTHER" id="PTHR11758">
    <property type="entry name" value="40S RIBOSOMAL PROTEIN S15A"/>
    <property type="match status" value="1"/>
</dbReference>
<dbReference type="Pfam" id="PF00410">
    <property type="entry name" value="Ribosomal_S8"/>
    <property type="match status" value="1"/>
</dbReference>
<dbReference type="SUPFAM" id="SSF56047">
    <property type="entry name" value="Ribosomal protein S8"/>
    <property type="match status" value="1"/>
</dbReference>
<dbReference type="PROSITE" id="PS00053">
    <property type="entry name" value="RIBOSOMAL_S8"/>
    <property type="match status" value="1"/>
</dbReference>
<comment type="function">
    <text evidence="1">One of the primary rRNA binding proteins, it binds directly to 16S rRNA central domain where it helps coordinate assembly of the platform of the 30S subunit.</text>
</comment>
<comment type="subunit">
    <text evidence="1">Part of the 30S ribosomal subunit. Contacts proteins S5 and S12.</text>
</comment>
<comment type="similarity">
    <text evidence="1">Belongs to the universal ribosomal protein uS8 family.</text>
</comment>
<proteinExistence type="inferred from homology"/>
<sequence>MVMTDPIADMLTRIRNANQMSHAKVLIPASKLKLEILSVLKTEGFIKNFYLPQSSRDIIVSLKYAPNKEKVIKGLKRVSKPGLRVYATAQQIPKVLNGLGVALVSTSKGILTDSQARISQVGGEILAYVW</sequence>
<evidence type="ECO:0000255" key="1">
    <source>
        <dbReference type="HAMAP-Rule" id="MF_01302"/>
    </source>
</evidence>
<evidence type="ECO:0000305" key="2"/>
<reference key="1">
    <citation type="journal article" date="2008" name="J. Bacteriol.">
        <title>Comparative genome analysis of 'Candidatus Phytoplasma australiense' (subgroup tuf-Australia I; rp-A) and 'Ca. Phytoplasma asteris' strains OY-M and AY-WB.</title>
        <authorList>
            <person name="Tran-Nguyen L.T."/>
            <person name="Kube M."/>
            <person name="Schneider B."/>
            <person name="Reinhardt R."/>
            <person name="Gibb K.S."/>
        </authorList>
    </citation>
    <scope>NUCLEOTIDE SEQUENCE [LARGE SCALE GENOMIC DNA]</scope>
</reference>
<accession>B1VAD4</accession>
<keyword id="KW-1185">Reference proteome</keyword>
<keyword id="KW-0687">Ribonucleoprotein</keyword>
<keyword id="KW-0689">Ribosomal protein</keyword>
<keyword id="KW-0694">RNA-binding</keyword>
<keyword id="KW-0699">rRNA-binding</keyword>
<name>RS8_PHYAS</name>
<feature type="chain" id="PRO_1000140591" description="Small ribosomal subunit protein uS8">
    <location>
        <begin position="1"/>
        <end position="130"/>
    </location>
</feature>
<gene>
    <name evidence="1" type="primary">rpsH</name>
    <name type="ordered locus">PA0573</name>
</gene>
<organism>
    <name type="scientific">Phytoplasma australiense</name>
    <dbReference type="NCBI Taxonomy" id="59748"/>
    <lineage>
        <taxon>Bacteria</taxon>
        <taxon>Bacillati</taxon>
        <taxon>Mycoplasmatota</taxon>
        <taxon>Mollicutes</taxon>
        <taxon>Acholeplasmatales</taxon>
        <taxon>Acholeplasmataceae</taxon>
        <taxon>Candidatus Phytoplasma</taxon>
        <taxon>16SrXII (Stolbur group)</taxon>
    </lineage>
</organism>
<protein>
    <recommendedName>
        <fullName evidence="1">Small ribosomal subunit protein uS8</fullName>
    </recommendedName>
    <alternativeName>
        <fullName evidence="2">30S ribosomal protein S8</fullName>
    </alternativeName>
</protein>